<sequence>MLQHLRPTLVLGVALTLLTGLAYPLAMTGLAGILFPVEAAGSLVERDGKVVGSRLIGQSFTGDRFFHGRPSATTAPDPTDASKTMPAPYNAANSGGSNLGPTSAALADRVKADVERLRAENPGAPVPVDLVTTSGSGLDPDISPEAALFQVPRIAKARHLPEERLRDLVAAQVQGRTLGLIGEPRVNVLALNLALDELAGK</sequence>
<keyword id="KW-0067">ATP-binding</keyword>
<keyword id="KW-0997">Cell inner membrane</keyword>
<keyword id="KW-1003">Cell membrane</keyword>
<keyword id="KW-0406">Ion transport</keyword>
<keyword id="KW-0472">Membrane</keyword>
<keyword id="KW-0547">Nucleotide-binding</keyword>
<keyword id="KW-0630">Potassium</keyword>
<keyword id="KW-0633">Potassium transport</keyword>
<keyword id="KW-1185">Reference proteome</keyword>
<keyword id="KW-0812">Transmembrane</keyword>
<keyword id="KW-1133">Transmembrane helix</keyword>
<keyword id="KW-0813">Transport</keyword>
<comment type="function">
    <text evidence="1">Part of the high-affinity ATP-driven potassium transport (or Kdp) system, which catalyzes the hydrolysis of ATP coupled with the electrogenic transport of potassium into the cytoplasm. This subunit acts as a catalytic chaperone that increases the ATP-binding affinity of the ATP-hydrolyzing subunit KdpB by the formation of a transient KdpB/KdpC/ATP ternary complex.</text>
</comment>
<comment type="subunit">
    <text evidence="1">The system is composed of three essential subunits: KdpA, KdpB and KdpC.</text>
</comment>
<comment type="subcellular location">
    <subcellularLocation>
        <location evidence="1">Cell inner membrane</location>
        <topology evidence="1">Single-pass membrane protein</topology>
    </subcellularLocation>
</comment>
<comment type="similarity">
    <text evidence="1">Belongs to the KdpC family.</text>
</comment>
<accession>B8I9I8</accession>
<protein>
    <recommendedName>
        <fullName evidence="1">Potassium-transporting ATPase KdpC subunit</fullName>
    </recommendedName>
    <alternativeName>
        <fullName evidence="1">ATP phosphohydrolase [potassium-transporting] C chain</fullName>
    </alternativeName>
    <alternativeName>
        <fullName evidence="1">Potassium-binding and translocating subunit C</fullName>
    </alternativeName>
    <alternativeName>
        <fullName evidence="1">Potassium-translocating ATPase C chain</fullName>
    </alternativeName>
</protein>
<evidence type="ECO:0000255" key="1">
    <source>
        <dbReference type="HAMAP-Rule" id="MF_00276"/>
    </source>
</evidence>
<organism>
    <name type="scientific">Methylobacterium nodulans (strain LMG 21967 / CNCM I-2342 / ORS 2060)</name>
    <dbReference type="NCBI Taxonomy" id="460265"/>
    <lineage>
        <taxon>Bacteria</taxon>
        <taxon>Pseudomonadati</taxon>
        <taxon>Pseudomonadota</taxon>
        <taxon>Alphaproteobacteria</taxon>
        <taxon>Hyphomicrobiales</taxon>
        <taxon>Methylobacteriaceae</taxon>
        <taxon>Methylobacterium</taxon>
    </lineage>
</organism>
<gene>
    <name evidence="1" type="primary">kdpC</name>
    <name type="ordered locus">Mnod_0196</name>
</gene>
<reference key="1">
    <citation type="submission" date="2009-01" db="EMBL/GenBank/DDBJ databases">
        <title>Complete sequence of chromosome of Methylobacterium nodulans ORS 2060.</title>
        <authorList>
            <consortium name="US DOE Joint Genome Institute"/>
            <person name="Lucas S."/>
            <person name="Copeland A."/>
            <person name="Lapidus A."/>
            <person name="Glavina del Rio T."/>
            <person name="Dalin E."/>
            <person name="Tice H."/>
            <person name="Bruce D."/>
            <person name="Goodwin L."/>
            <person name="Pitluck S."/>
            <person name="Sims D."/>
            <person name="Brettin T."/>
            <person name="Detter J.C."/>
            <person name="Han C."/>
            <person name="Larimer F."/>
            <person name="Land M."/>
            <person name="Hauser L."/>
            <person name="Kyrpides N."/>
            <person name="Ivanova N."/>
            <person name="Marx C.J."/>
            <person name="Richardson P."/>
        </authorList>
    </citation>
    <scope>NUCLEOTIDE SEQUENCE [LARGE SCALE GENOMIC DNA]</scope>
    <source>
        <strain>LMG 21967 / CNCM I-2342 / ORS 2060</strain>
    </source>
</reference>
<name>KDPC_METNO</name>
<feature type="chain" id="PRO_1000132520" description="Potassium-transporting ATPase KdpC subunit">
    <location>
        <begin position="1"/>
        <end position="201"/>
    </location>
</feature>
<feature type="transmembrane region" description="Helical" evidence="1">
    <location>
        <begin position="17"/>
        <end position="37"/>
    </location>
</feature>
<dbReference type="EMBL" id="CP001349">
    <property type="protein sequence ID" value="ACL55241.1"/>
    <property type="molecule type" value="Genomic_DNA"/>
</dbReference>
<dbReference type="RefSeq" id="WP_015926954.1">
    <property type="nucleotide sequence ID" value="NC_011894.1"/>
</dbReference>
<dbReference type="SMR" id="B8I9I8"/>
<dbReference type="STRING" id="460265.Mnod_0196"/>
<dbReference type="KEGG" id="mno:Mnod_0196"/>
<dbReference type="eggNOG" id="COG2156">
    <property type="taxonomic scope" value="Bacteria"/>
</dbReference>
<dbReference type="HOGENOM" id="CLU_077094_2_0_5"/>
<dbReference type="OrthoDB" id="9788285at2"/>
<dbReference type="Proteomes" id="UP000008207">
    <property type="component" value="Chromosome"/>
</dbReference>
<dbReference type="GO" id="GO:0005886">
    <property type="term" value="C:plasma membrane"/>
    <property type="evidence" value="ECO:0007669"/>
    <property type="project" value="UniProtKB-SubCell"/>
</dbReference>
<dbReference type="GO" id="GO:0005524">
    <property type="term" value="F:ATP binding"/>
    <property type="evidence" value="ECO:0007669"/>
    <property type="project" value="UniProtKB-UniRule"/>
</dbReference>
<dbReference type="GO" id="GO:0008556">
    <property type="term" value="F:P-type potassium transmembrane transporter activity"/>
    <property type="evidence" value="ECO:0007669"/>
    <property type="project" value="InterPro"/>
</dbReference>
<dbReference type="HAMAP" id="MF_00276">
    <property type="entry name" value="KdpC"/>
    <property type="match status" value="1"/>
</dbReference>
<dbReference type="InterPro" id="IPR003820">
    <property type="entry name" value="KdpC"/>
</dbReference>
<dbReference type="NCBIfam" id="TIGR00681">
    <property type="entry name" value="kdpC"/>
    <property type="match status" value="1"/>
</dbReference>
<dbReference type="NCBIfam" id="NF001454">
    <property type="entry name" value="PRK00315.1"/>
    <property type="match status" value="1"/>
</dbReference>
<dbReference type="NCBIfam" id="NF010603">
    <property type="entry name" value="PRK13999.1"/>
    <property type="match status" value="1"/>
</dbReference>
<dbReference type="PANTHER" id="PTHR30042">
    <property type="entry name" value="POTASSIUM-TRANSPORTING ATPASE C CHAIN"/>
    <property type="match status" value="1"/>
</dbReference>
<dbReference type="PANTHER" id="PTHR30042:SF2">
    <property type="entry name" value="POTASSIUM-TRANSPORTING ATPASE KDPC SUBUNIT"/>
    <property type="match status" value="1"/>
</dbReference>
<dbReference type="Pfam" id="PF02669">
    <property type="entry name" value="KdpC"/>
    <property type="match status" value="1"/>
</dbReference>
<dbReference type="PIRSF" id="PIRSF001296">
    <property type="entry name" value="K_ATPase_KdpC"/>
    <property type="match status" value="1"/>
</dbReference>
<proteinExistence type="inferred from homology"/>